<organism>
    <name type="scientific">Moorella thermoacetica (strain ATCC 39073 / JCM 9320)</name>
    <dbReference type="NCBI Taxonomy" id="264732"/>
    <lineage>
        <taxon>Bacteria</taxon>
        <taxon>Bacillati</taxon>
        <taxon>Bacillota</taxon>
        <taxon>Clostridia</taxon>
        <taxon>Moorellales</taxon>
        <taxon>Moorellaceae</taxon>
        <taxon>Moorella</taxon>
    </lineage>
</organism>
<accession>Q2RG98</accession>
<comment type="function">
    <text evidence="1">Catalyzes the isomerization between 2-isopropylmalate and 3-isopropylmalate, via the formation of 2-isopropylmaleate.</text>
</comment>
<comment type="catalytic activity">
    <reaction evidence="1">
        <text>(2R,3S)-3-isopropylmalate = (2S)-2-isopropylmalate</text>
        <dbReference type="Rhea" id="RHEA:32287"/>
        <dbReference type="ChEBI" id="CHEBI:1178"/>
        <dbReference type="ChEBI" id="CHEBI:35121"/>
        <dbReference type="EC" id="4.2.1.33"/>
    </reaction>
</comment>
<comment type="cofactor">
    <cofactor evidence="1">
        <name>[4Fe-4S] cluster</name>
        <dbReference type="ChEBI" id="CHEBI:49883"/>
    </cofactor>
    <text evidence="1">Binds 1 [4Fe-4S] cluster per subunit.</text>
</comment>
<comment type="pathway">
    <text evidence="1">Amino-acid biosynthesis; L-leucine biosynthesis; L-leucine from 3-methyl-2-oxobutanoate: step 2/4.</text>
</comment>
<comment type="subunit">
    <text evidence="1">Heterodimer of LeuC and LeuD.</text>
</comment>
<comment type="similarity">
    <text evidence="1">Belongs to the aconitase/IPM isomerase family. LeuC type 2 subfamily.</text>
</comment>
<protein>
    <recommendedName>
        <fullName evidence="1">3-isopropylmalate dehydratase large subunit</fullName>
        <ecNumber evidence="1">4.2.1.33</ecNumber>
    </recommendedName>
    <alternativeName>
        <fullName evidence="1">Alpha-IPM isomerase</fullName>
        <shortName evidence="1">IPMI</shortName>
    </alternativeName>
    <alternativeName>
        <fullName evidence="1">Isopropylmalate isomerase</fullName>
    </alternativeName>
</protein>
<name>LEUC_MOOTA</name>
<reference key="1">
    <citation type="journal article" date="2008" name="Environ. Microbiol.">
        <title>The complete genome sequence of Moorella thermoacetica (f. Clostridium thermoaceticum).</title>
        <authorList>
            <person name="Pierce E."/>
            <person name="Xie G."/>
            <person name="Barabote R.D."/>
            <person name="Saunders E."/>
            <person name="Han C.S."/>
            <person name="Detter J.C."/>
            <person name="Richardson P."/>
            <person name="Brettin T.S."/>
            <person name="Das A."/>
            <person name="Ljungdahl L.G."/>
            <person name="Ragsdale S.W."/>
        </authorList>
    </citation>
    <scope>NUCLEOTIDE SEQUENCE [LARGE SCALE GENOMIC DNA]</scope>
    <source>
        <strain>ATCC 39073 / JCM 9320</strain>
    </source>
</reference>
<gene>
    <name evidence="1" type="primary">leuC</name>
    <name type="ordered locus">Moth_2254</name>
</gene>
<dbReference type="EC" id="4.2.1.33" evidence="1"/>
<dbReference type="EMBL" id="CP000232">
    <property type="protein sequence ID" value="ABC20541.1"/>
    <property type="molecule type" value="Genomic_DNA"/>
</dbReference>
<dbReference type="RefSeq" id="YP_431084.1">
    <property type="nucleotide sequence ID" value="NC_007644.1"/>
</dbReference>
<dbReference type="SMR" id="Q2RG98"/>
<dbReference type="STRING" id="264732.Moth_2254"/>
<dbReference type="EnsemblBacteria" id="ABC20541">
    <property type="protein sequence ID" value="ABC20541"/>
    <property type="gene ID" value="Moth_2254"/>
</dbReference>
<dbReference type="KEGG" id="mta:Moth_2254"/>
<dbReference type="PATRIC" id="fig|264732.11.peg.2453"/>
<dbReference type="eggNOG" id="COG0065">
    <property type="taxonomic scope" value="Bacteria"/>
</dbReference>
<dbReference type="HOGENOM" id="CLU_006714_3_4_9"/>
<dbReference type="OrthoDB" id="9764318at2"/>
<dbReference type="UniPathway" id="UPA00048">
    <property type="reaction ID" value="UER00071"/>
</dbReference>
<dbReference type="GO" id="GO:0003861">
    <property type="term" value="F:3-isopropylmalate dehydratase activity"/>
    <property type="evidence" value="ECO:0007669"/>
    <property type="project" value="UniProtKB-UniRule"/>
</dbReference>
<dbReference type="GO" id="GO:0051539">
    <property type="term" value="F:4 iron, 4 sulfur cluster binding"/>
    <property type="evidence" value="ECO:0007669"/>
    <property type="project" value="UniProtKB-KW"/>
</dbReference>
<dbReference type="GO" id="GO:0046872">
    <property type="term" value="F:metal ion binding"/>
    <property type="evidence" value="ECO:0007669"/>
    <property type="project" value="UniProtKB-KW"/>
</dbReference>
<dbReference type="GO" id="GO:0009098">
    <property type="term" value="P:L-leucine biosynthetic process"/>
    <property type="evidence" value="ECO:0007669"/>
    <property type="project" value="UniProtKB-UniRule"/>
</dbReference>
<dbReference type="CDD" id="cd01583">
    <property type="entry name" value="IPMI"/>
    <property type="match status" value="1"/>
</dbReference>
<dbReference type="Gene3D" id="3.30.499.10">
    <property type="entry name" value="Aconitase, domain 3"/>
    <property type="match status" value="2"/>
</dbReference>
<dbReference type="HAMAP" id="MF_01027">
    <property type="entry name" value="LeuC_type2"/>
    <property type="match status" value="1"/>
</dbReference>
<dbReference type="InterPro" id="IPR015931">
    <property type="entry name" value="Acnase/IPM_dHydase_lsu_aba_1/3"/>
</dbReference>
<dbReference type="InterPro" id="IPR001030">
    <property type="entry name" value="Acoase/IPM_deHydtase_lsu_aba"/>
</dbReference>
<dbReference type="InterPro" id="IPR018136">
    <property type="entry name" value="Aconitase_4Fe-4S_BS"/>
</dbReference>
<dbReference type="InterPro" id="IPR036008">
    <property type="entry name" value="Aconitase_4Fe-4S_dom"/>
</dbReference>
<dbReference type="InterPro" id="IPR011826">
    <property type="entry name" value="HAcnase/IPMdehydase_lsu_prok"/>
</dbReference>
<dbReference type="InterPro" id="IPR006251">
    <property type="entry name" value="Homoacnase/IPMdehydase_lsu"/>
</dbReference>
<dbReference type="InterPro" id="IPR050067">
    <property type="entry name" value="IPM_dehydratase_rel_enz"/>
</dbReference>
<dbReference type="InterPro" id="IPR033941">
    <property type="entry name" value="IPMI_cat"/>
</dbReference>
<dbReference type="InterPro" id="IPR011823">
    <property type="entry name" value="IsopropMal_deHydtase_lsu_bac"/>
</dbReference>
<dbReference type="NCBIfam" id="TIGR01343">
    <property type="entry name" value="hacA_fam"/>
    <property type="match status" value="1"/>
</dbReference>
<dbReference type="NCBIfam" id="TIGR02086">
    <property type="entry name" value="IPMI_arch"/>
    <property type="match status" value="1"/>
</dbReference>
<dbReference type="NCBIfam" id="TIGR02083">
    <property type="entry name" value="LEU2"/>
    <property type="match status" value="1"/>
</dbReference>
<dbReference type="NCBIfam" id="NF001614">
    <property type="entry name" value="PRK00402.1"/>
    <property type="match status" value="1"/>
</dbReference>
<dbReference type="PANTHER" id="PTHR43822:SF16">
    <property type="entry name" value="3-ISOPROPYLMALATE DEHYDRATASE LARGE SUBUNIT 2"/>
    <property type="match status" value="1"/>
</dbReference>
<dbReference type="PANTHER" id="PTHR43822">
    <property type="entry name" value="HOMOACONITASE, MITOCHONDRIAL-RELATED"/>
    <property type="match status" value="1"/>
</dbReference>
<dbReference type="Pfam" id="PF00330">
    <property type="entry name" value="Aconitase"/>
    <property type="match status" value="2"/>
</dbReference>
<dbReference type="PRINTS" id="PR00415">
    <property type="entry name" value="ACONITASE"/>
</dbReference>
<dbReference type="SUPFAM" id="SSF53732">
    <property type="entry name" value="Aconitase iron-sulfur domain"/>
    <property type="match status" value="1"/>
</dbReference>
<dbReference type="PROSITE" id="PS00450">
    <property type="entry name" value="ACONITASE_1"/>
    <property type="match status" value="1"/>
</dbReference>
<dbReference type="PROSITE" id="PS01244">
    <property type="entry name" value="ACONITASE_2"/>
    <property type="match status" value="1"/>
</dbReference>
<sequence length="421" mass="45149">MGMTITEKILAAHAGLKAVEPGQLINAKVDLALGNDITAPLAIQEFKKLGVKKVFDPERVVLVPDHFTPAKDIKSAEQAKILRDFAREQGLTHYFEIGRMGIEHCLLPEAGLVGPGDLVIGADSHTCTYGALGAFATGVGSTDLAAAMATGELWFKVPETILFRYHGKLKPWVGGKDLILYTIGRIGVDGARYMAMEFTGEAITNLSMEGRFTMANMAIEAGGKNGIFPVDEKTVEYIRGRLQRDYRIYQSDPDARYNQEIDIDASKIEPQVALPHLPENARSVKEIGEIKIDQVVIGSCTNGRLEDLRVAAQILKGQKVHPEVRLIVIPGTQQIYAAALAEGLIATFIEAGAAVSTPTCGPCLGGHMGILAKGERALATTNRNFVGRMGHPESEVYLAGPAVAAASAVKGRIAAPEEVVK</sequence>
<proteinExistence type="inferred from homology"/>
<keyword id="KW-0004">4Fe-4S</keyword>
<keyword id="KW-0028">Amino-acid biosynthesis</keyword>
<keyword id="KW-0100">Branched-chain amino acid biosynthesis</keyword>
<keyword id="KW-0408">Iron</keyword>
<keyword id="KW-0411">Iron-sulfur</keyword>
<keyword id="KW-0432">Leucine biosynthesis</keyword>
<keyword id="KW-0456">Lyase</keyword>
<keyword id="KW-0479">Metal-binding</keyword>
<feature type="chain" id="PRO_1000063650" description="3-isopropylmalate dehydratase large subunit">
    <location>
        <begin position="1"/>
        <end position="421"/>
    </location>
</feature>
<feature type="binding site" evidence="1">
    <location>
        <position position="300"/>
    </location>
    <ligand>
        <name>[4Fe-4S] cluster</name>
        <dbReference type="ChEBI" id="CHEBI:49883"/>
    </ligand>
</feature>
<feature type="binding site" evidence="1">
    <location>
        <position position="360"/>
    </location>
    <ligand>
        <name>[4Fe-4S] cluster</name>
        <dbReference type="ChEBI" id="CHEBI:49883"/>
    </ligand>
</feature>
<feature type="binding site" evidence="1">
    <location>
        <position position="363"/>
    </location>
    <ligand>
        <name>[4Fe-4S] cluster</name>
        <dbReference type="ChEBI" id="CHEBI:49883"/>
    </ligand>
</feature>
<evidence type="ECO:0000255" key="1">
    <source>
        <dbReference type="HAMAP-Rule" id="MF_01027"/>
    </source>
</evidence>